<sequence length="179" mass="19831">MDVKVLRLGHRPSRDARITTHVCLTARAFGASEVILSGEEDPKLMEGVEDVVRRWGGPFSVVYRRNWQGVIDSWKKDGGEVIHLTMYGLPARDVVPGIMDNGKDKLIVVGGARVPGKVYSLADYNVGVTNQPHSEVSSLAVFMHMLLDGAEFDLKFEDARIEVIPQARGKMLREIDDGD</sequence>
<dbReference type="EC" id="2.1.1.206" evidence="1"/>
<dbReference type="EMBL" id="AE000666">
    <property type="protein sequence ID" value="AAB85602.1"/>
    <property type="status" value="ALT_INIT"/>
    <property type="molecule type" value="Genomic_DNA"/>
</dbReference>
<dbReference type="PIR" id="B69015">
    <property type="entry name" value="B69015"/>
</dbReference>
<dbReference type="SMR" id="O27185"/>
<dbReference type="FunCoup" id="O27185">
    <property type="interactions" value="1"/>
</dbReference>
<dbReference type="STRING" id="187420.MTH_1113"/>
<dbReference type="PaxDb" id="187420-MTH_1113"/>
<dbReference type="EnsemblBacteria" id="AAB85602">
    <property type="protein sequence ID" value="AAB85602"/>
    <property type="gene ID" value="MTH_1113"/>
</dbReference>
<dbReference type="KEGG" id="mth:MTH_1113"/>
<dbReference type="PATRIC" id="fig|187420.15.peg.1089"/>
<dbReference type="HOGENOM" id="CLU_123709_0_0_2"/>
<dbReference type="InParanoid" id="O27185"/>
<dbReference type="Proteomes" id="UP000005223">
    <property type="component" value="Chromosome"/>
</dbReference>
<dbReference type="GO" id="GO:0005737">
    <property type="term" value="C:cytoplasm"/>
    <property type="evidence" value="ECO:0007669"/>
    <property type="project" value="UniProtKB-SubCell"/>
</dbReference>
<dbReference type="GO" id="GO:0106059">
    <property type="term" value="F:tRNA (cytidine(56)-2'-O)-methyltransferase activity"/>
    <property type="evidence" value="ECO:0007669"/>
    <property type="project" value="UniProtKB-EC"/>
</dbReference>
<dbReference type="GO" id="GO:0002128">
    <property type="term" value="P:tRNA nucleoside ribose methylation"/>
    <property type="evidence" value="ECO:0007669"/>
    <property type="project" value="UniProtKB-UniRule"/>
</dbReference>
<dbReference type="CDD" id="cd18083">
    <property type="entry name" value="aTrm56-like"/>
    <property type="match status" value="1"/>
</dbReference>
<dbReference type="Gene3D" id="3.40.1280.10">
    <property type="match status" value="1"/>
</dbReference>
<dbReference type="HAMAP" id="MF_00077">
    <property type="entry name" value="tRNA_methyltr_aTrm56"/>
    <property type="match status" value="1"/>
</dbReference>
<dbReference type="InterPro" id="IPR029028">
    <property type="entry name" value="Alpha/beta_knot_MTases"/>
</dbReference>
<dbReference type="InterPro" id="IPR029026">
    <property type="entry name" value="tRNA_m1G_MTases_N"/>
</dbReference>
<dbReference type="InterPro" id="IPR002845">
    <property type="entry name" value="tRNA_mtfrase_aTrm56"/>
</dbReference>
<dbReference type="PANTHER" id="PTHR42197">
    <property type="entry name" value="TRNA (CYTIDINE(56)-2'-O)-METHYLTRANSFERASE"/>
    <property type="match status" value="1"/>
</dbReference>
<dbReference type="PANTHER" id="PTHR42197:SF1">
    <property type="entry name" value="TRNA (CYTIDINE(56)-2'-O)-METHYLTRANSFERASE"/>
    <property type="match status" value="1"/>
</dbReference>
<dbReference type="Pfam" id="PF01994">
    <property type="entry name" value="Trm56"/>
    <property type="match status" value="1"/>
</dbReference>
<dbReference type="PIRSF" id="PIRSF016123">
    <property type="entry name" value="UCP016123"/>
    <property type="match status" value="1"/>
</dbReference>
<dbReference type="SUPFAM" id="SSF75217">
    <property type="entry name" value="alpha/beta knot"/>
    <property type="match status" value="1"/>
</dbReference>
<name>TRM56_METTH</name>
<comment type="function">
    <text evidence="1">Specifically catalyzes the AdoMet-dependent 2'-O-ribose methylation of cytidine at position 56 in tRNAs.</text>
</comment>
<comment type="catalytic activity">
    <reaction evidence="1">
        <text>cytidine(56) in tRNA + S-adenosyl-L-methionine = 2'-O-methylcytidine(56) in tRNA + S-adenosyl-L-homocysteine + H(+)</text>
        <dbReference type="Rhea" id="RHEA:42968"/>
        <dbReference type="Rhea" id="RHEA-COMP:10308"/>
        <dbReference type="Rhea" id="RHEA-COMP:10309"/>
        <dbReference type="ChEBI" id="CHEBI:15378"/>
        <dbReference type="ChEBI" id="CHEBI:57856"/>
        <dbReference type="ChEBI" id="CHEBI:59789"/>
        <dbReference type="ChEBI" id="CHEBI:74495"/>
        <dbReference type="ChEBI" id="CHEBI:82748"/>
        <dbReference type="EC" id="2.1.1.206"/>
    </reaction>
</comment>
<comment type="subunit">
    <text evidence="1">Homodimer.</text>
</comment>
<comment type="subcellular location">
    <subcellularLocation>
        <location evidence="1">Cytoplasm</location>
    </subcellularLocation>
</comment>
<comment type="similarity">
    <text evidence="1">Belongs to the aTrm56 family.</text>
</comment>
<comment type="sequence caution" evidence="2">
    <conflict type="erroneous initiation">
        <sequence resource="EMBL-CDS" id="AAB85602"/>
    </conflict>
</comment>
<accession>O27185</accession>
<reference key="1">
    <citation type="journal article" date="1997" name="J. Bacteriol.">
        <title>Complete genome sequence of Methanobacterium thermoautotrophicum deltaH: functional analysis and comparative genomics.</title>
        <authorList>
            <person name="Smith D.R."/>
            <person name="Doucette-Stamm L.A."/>
            <person name="Deloughery C."/>
            <person name="Lee H.-M."/>
            <person name="Dubois J."/>
            <person name="Aldredge T."/>
            <person name="Bashirzadeh R."/>
            <person name="Blakely D."/>
            <person name="Cook R."/>
            <person name="Gilbert K."/>
            <person name="Harrison D."/>
            <person name="Hoang L."/>
            <person name="Keagle P."/>
            <person name="Lumm W."/>
            <person name="Pothier B."/>
            <person name="Qiu D."/>
            <person name="Spadafora R."/>
            <person name="Vicare R."/>
            <person name="Wang Y."/>
            <person name="Wierzbowski J."/>
            <person name="Gibson R."/>
            <person name="Jiwani N."/>
            <person name="Caruso A."/>
            <person name="Bush D."/>
            <person name="Safer H."/>
            <person name="Patwell D."/>
            <person name="Prabhakar S."/>
            <person name="McDougall S."/>
            <person name="Shimer G."/>
            <person name="Goyal A."/>
            <person name="Pietrovski S."/>
            <person name="Church G.M."/>
            <person name="Daniels C.J."/>
            <person name="Mao J.-I."/>
            <person name="Rice P."/>
            <person name="Noelling J."/>
            <person name="Reeve J.N."/>
        </authorList>
    </citation>
    <scope>NUCLEOTIDE SEQUENCE [LARGE SCALE GENOMIC DNA]</scope>
    <source>
        <strain>ATCC 29096 / DSM 1053 / JCM 10044 / NBRC 100330 / Delta H</strain>
    </source>
</reference>
<organism>
    <name type="scientific">Methanothermobacter thermautotrophicus (strain ATCC 29096 / DSM 1053 / JCM 10044 / NBRC 100330 / Delta H)</name>
    <name type="common">Methanobacterium thermoautotrophicum</name>
    <dbReference type="NCBI Taxonomy" id="187420"/>
    <lineage>
        <taxon>Archaea</taxon>
        <taxon>Methanobacteriati</taxon>
        <taxon>Methanobacteriota</taxon>
        <taxon>Methanomada group</taxon>
        <taxon>Methanobacteria</taxon>
        <taxon>Methanobacteriales</taxon>
        <taxon>Methanobacteriaceae</taxon>
        <taxon>Methanothermobacter</taxon>
    </lineage>
</organism>
<evidence type="ECO:0000255" key="1">
    <source>
        <dbReference type="HAMAP-Rule" id="MF_00077"/>
    </source>
</evidence>
<evidence type="ECO:0000305" key="2"/>
<keyword id="KW-0963">Cytoplasm</keyword>
<keyword id="KW-0489">Methyltransferase</keyword>
<keyword id="KW-1185">Reference proteome</keyword>
<keyword id="KW-0949">S-adenosyl-L-methionine</keyword>
<keyword id="KW-0808">Transferase</keyword>
<keyword id="KW-0819">tRNA processing</keyword>
<protein>
    <recommendedName>
        <fullName evidence="1">tRNA (cytidine(56)-2'-O)-methyltransferase</fullName>
        <ecNumber evidence="1">2.1.1.206</ecNumber>
    </recommendedName>
    <alternativeName>
        <fullName evidence="1">tRNA ribose 2'-O-methyltransferase aTrm56</fullName>
    </alternativeName>
</protein>
<proteinExistence type="inferred from homology"/>
<feature type="chain" id="PRO_0000146932" description="tRNA (cytidine(56)-2'-O)-methyltransferase">
    <location>
        <begin position="1"/>
        <end position="179"/>
    </location>
</feature>
<feature type="binding site" evidence="1">
    <location>
        <position position="84"/>
    </location>
    <ligand>
        <name>S-adenosyl-L-methionine</name>
        <dbReference type="ChEBI" id="CHEBI:59789"/>
    </ligand>
</feature>
<gene>
    <name type="ordered locus">MTH_1113</name>
</gene>